<accession>P51554</accession>
<organism>
    <name type="scientific">Hydra vulgaris</name>
    <name type="common">Hydra</name>
    <name type="synonym">Hydra attenuata</name>
    <dbReference type="NCBI Taxonomy" id="6087"/>
    <lineage>
        <taxon>Eukaryota</taxon>
        <taxon>Metazoa</taxon>
        <taxon>Cnidaria</taxon>
        <taxon>Hydrozoa</taxon>
        <taxon>Hydroidolina</taxon>
        <taxon>Anthoathecata</taxon>
        <taxon>Aplanulata</taxon>
        <taxon>Hydridae</taxon>
        <taxon>Hydra</taxon>
    </lineage>
</organism>
<evidence type="ECO:0000250" key="1"/>
<evidence type="ECO:0000255" key="2">
    <source>
        <dbReference type="PROSITE-ProRule" id="PRU01059"/>
    </source>
</evidence>
<feature type="chain" id="PRO_0000090926" description="Elongation factor 1-alpha">
    <location>
        <begin position="1"/>
        <end position="468"/>
    </location>
</feature>
<feature type="domain" description="tr-type G" evidence="2">
    <location>
        <begin position="6"/>
        <end position="244"/>
    </location>
</feature>
<feature type="region of interest" description="G1" evidence="2">
    <location>
        <begin position="15"/>
        <end position="22"/>
    </location>
</feature>
<feature type="region of interest" description="G2" evidence="2">
    <location>
        <begin position="71"/>
        <end position="75"/>
    </location>
</feature>
<feature type="region of interest" description="G3" evidence="2">
    <location>
        <begin position="92"/>
        <end position="95"/>
    </location>
</feature>
<feature type="region of interest" description="G4" evidence="2">
    <location>
        <begin position="154"/>
        <end position="157"/>
    </location>
</feature>
<feature type="region of interest" description="G5" evidence="2">
    <location>
        <begin position="195"/>
        <end position="197"/>
    </location>
</feature>
<feature type="binding site" evidence="1">
    <location>
        <begin position="15"/>
        <end position="22"/>
    </location>
    <ligand>
        <name>GTP</name>
        <dbReference type="ChEBI" id="CHEBI:37565"/>
    </ligand>
</feature>
<feature type="binding site" evidence="1">
    <location>
        <begin position="92"/>
        <end position="96"/>
    </location>
    <ligand>
        <name>GTP</name>
        <dbReference type="ChEBI" id="CHEBI:37565"/>
    </ligand>
</feature>
<feature type="binding site" evidence="1">
    <location>
        <begin position="154"/>
        <end position="157"/>
    </location>
    <ligand>
        <name>GTP</name>
        <dbReference type="ChEBI" id="CHEBI:37565"/>
    </ligand>
</feature>
<feature type="modified residue" description="5-glutamyl glycerylphosphorylethanolamine" evidence="1">
    <location>
        <position position="303"/>
    </location>
</feature>
<feature type="modified residue" description="5-glutamyl glycerylphosphorylethanolamine" evidence="1">
    <location>
        <position position="376"/>
    </location>
</feature>
<keyword id="KW-0963">Cytoplasm</keyword>
<keyword id="KW-0251">Elongation factor</keyword>
<keyword id="KW-0342">GTP-binding</keyword>
<keyword id="KW-0547">Nucleotide-binding</keyword>
<keyword id="KW-0597">Phosphoprotein</keyword>
<keyword id="KW-0648">Protein biosynthesis</keyword>
<keyword id="KW-1185">Reference proteome</keyword>
<sequence>MSNKVKPHINIVVIGHVDSGKSTSTGHMIYKCGGIDKRQIEKFEKEAQEMGKGSFKYAWVLDKLKAERERGITIDIALWKFETTKYVVTIIDAPGHRDFIKNMITGTSQADCAVLIVASSTGEFEAGISKNGQTREHALLAFTLGVKQMIVAVNKIDNTEPPYSEARFNEIKKEISAYVKKVGYDPKTVPVLPVSGWHGDNMIEPSPNMSWYKGWEVEYKDTGKHTGKTLLEALDNIPLPARPSSKPLRLPLQDVYKIGGIGTVPVGRVETGILKPGMVVTFCPANLSTEVKSVEMHHESLPEALPGDNVGFNVKNVSIKDIRRGMVASDSKNDPAIEAASFKAQVIILNHPGEIHAGYQPVLDCHTAHIACKFAELLEKIDRRSGKVIETEPKMVKSGDAAIINLIPSKGMCVESFSQYPPLGRFAVRDMRQTVAVGVIKEVDKTVAVAGKVTKSAQKAGVAAGKKK</sequence>
<proteinExistence type="evidence at transcript level"/>
<comment type="function">
    <text>This protein promotes the GTP-dependent binding of aminoacyl-tRNA to the A-site of ribosomes during protein biosynthesis.</text>
</comment>
<comment type="subcellular location">
    <subcellularLocation>
        <location>Cytoplasm</location>
    </subcellularLocation>
</comment>
<comment type="similarity">
    <text evidence="2">Belongs to the TRAFAC class translation factor GTPase superfamily. Classic translation factor GTPase family. EF-Tu/EF-1A subfamily.</text>
</comment>
<name>EF1A_HYDVU</name>
<dbReference type="EMBL" id="Z68181">
    <property type="protein sequence ID" value="CAA92323.1"/>
    <property type="molecule type" value="mRNA"/>
</dbReference>
<dbReference type="RefSeq" id="NP_001296663.1">
    <property type="nucleotide sequence ID" value="NM_001309734.1"/>
</dbReference>
<dbReference type="SMR" id="P51554"/>
<dbReference type="EnsemblMetazoa" id="NM_001309734.1">
    <property type="protein sequence ID" value="NP_001296663.1"/>
    <property type="gene ID" value="LOC100206683"/>
</dbReference>
<dbReference type="GeneID" id="100206683"/>
<dbReference type="KEGG" id="hmg:100206683"/>
<dbReference type="OrthoDB" id="342024at2759"/>
<dbReference type="Proteomes" id="UP000694840">
    <property type="component" value="Unplaced"/>
</dbReference>
<dbReference type="GO" id="GO:0005737">
    <property type="term" value="C:cytoplasm"/>
    <property type="evidence" value="ECO:0007669"/>
    <property type="project" value="UniProtKB-SubCell"/>
</dbReference>
<dbReference type="GO" id="GO:0005525">
    <property type="term" value="F:GTP binding"/>
    <property type="evidence" value="ECO:0007669"/>
    <property type="project" value="UniProtKB-KW"/>
</dbReference>
<dbReference type="GO" id="GO:0003924">
    <property type="term" value="F:GTPase activity"/>
    <property type="evidence" value="ECO:0007669"/>
    <property type="project" value="InterPro"/>
</dbReference>
<dbReference type="GO" id="GO:0003746">
    <property type="term" value="F:translation elongation factor activity"/>
    <property type="evidence" value="ECO:0007669"/>
    <property type="project" value="UniProtKB-KW"/>
</dbReference>
<dbReference type="CDD" id="cd01883">
    <property type="entry name" value="EF1_alpha"/>
    <property type="match status" value="1"/>
</dbReference>
<dbReference type="CDD" id="cd03693">
    <property type="entry name" value="EF1_alpha_II"/>
    <property type="match status" value="1"/>
</dbReference>
<dbReference type="CDD" id="cd03705">
    <property type="entry name" value="EF1_alpha_III"/>
    <property type="match status" value="1"/>
</dbReference>
<dbReference type="FunFam" id="2.40.30.10:FF:000003">
    <property type="entry name" value="Elongation factor 1-alpha"/>
    <property type="match status" value="1"/>
</dbReference>
<dbReference type="FunFam" id="2.40.30.10:FF:000005">
    <property type="entry name" value="Elongation factor 1-alpha"/>
    <property type="match status" value="1"/>
</dbReference>
<dbReference type="FunFam" id="3.40.50.300:FF:000090">
    <property type="entry name" value="Elongation factor 1-alpha"/>
    <property type="match status" value="1"/>
</dbReference>
<dbReference type="Gene3D" id="3.40.50.300">
    <property type="entry name" value="P-loop containing nucleotide triphosphate hydrolases"/>
    <property type="match status" value="1"/>
</dbReference>
<dbReference type="Gene3D" id="2.40.30.10">
    <property type="entry name" value="Translation factors"/>
    <property type="match status" value="2"/>
</dbReference>
<dbReference type="InterPro" id="IPR004161">
    <property type="entry name" value="EFTu-like_2"/>
</dbReference>
<dbReference type="InterPro" id="IPR031157">
    <property type="entry name" value="G_TR_CS"/>
</dbReference>
<dbReference type="InterPro" id="IPR054696">
    <property type="entry name" value="GTP-eEF1A_C"/>
</dbReference>
<dbReference type="InterPro" id="IPR027417">
    <property type="entry name" value="P-loop_NTPase"/>
</dbReference>
<dbReference type="InterPro" id="IPR000795">
    <property type="entry name" value="T_Tr_GTP-bd_dom"/>
</dbReference>
<dbReference type="InterPro" id="IPR050100">
    <property type="entry name" value="TRAFAC_GTPase_members"/>
</dbReference>
<dbReference type="InterPro" id="IPR009000">
    <property type="entry name" value="Transl_B-barrel_sf"/>
</dbReference>
<dbReference type="InterPro" id="IPR009001">
    <property type="entry name" value="Transl_elong_EF1A/Init_IF2_C"/>
</dbReference>
<dbReference type="InterPro" id="IPR004539">
    <property type="entry name" value="Transl_elong_EF1A_euk/arc"/>
</dbReference>
<dbReference type="NCBIfam" id="TIGR00483">
    <property type="entry name" value="EF-1_alpha"/>
    <property type="match status" value="1"/>
</dbReference>
<dbReference type="NCBIfam" id="NF008969">
    <property type="entry name" value="PRK12317.1"/>
    <property type="match status" value="1"/>
</dbReference>
<dbReference type="PANTHER" id="PTHR23115">
    <property type="entry name" value="TRANSLATION FACTOR"/>
    <property type="match status" value="1"/>
</dbReference>
<dbReference type="Pfam" id="PF22594">
    <property type="entry name" value="GTP-eEF1A_C"/>
    <property type="match status" value="1"/>
</dbReference>
<dbReference type="Pfam" id="PF00009">
    <property type="entry name" value="GTP_EFTU"/>
    <property type="match status" value="1"/>
</dbReference>
<dbReference type="Pfam" id="PF03144">
    <property type="entry name" value="GTP_EFTU_D2"/>
    <property type="match status" value="1"/>
</dbReference>
<dbReference type="PRINTS" id="PR00315">
    <property type="entry name" value="ELONGATNFCT"/>
</dbReference>
<dbReference type="SUPFAM" id="SSF50465">
    <property type="entry name" value="EF-Tu/eEF-1alpha/eIF2-gamma C-terminal domain"/>
    <property type="match status" value="1"/>
</dbReference>
<dbReference type="SUPFAM" id="SSF52540">
    <property type="entry name" value="P-loop containing nucleoside triphosphate hydrolases"/>
    <property type="match status" value="1"/>
</dbReference>
<dbReference type="SUPFAM" id="SSF50447">
    <property type="entry name" value="Translation proteins"/>
    <property type="match status" value="1"/>
</dbReference>
<dbReference type="PROSITE" id="PS00301">
    <property type="entry name" value="G_TR_1"/>
    <property type="match status" value="1"/>
</dbReference>
<dbReference type="PROSITE" id="PS51722">
    <property type="entry name" value="G_TR_2"/>
    <property type="match status" value="1"/>
</dbReference>
<protein>
    <recommendedName>
        <fullName>Elongation factor 1-alpha</fullName>
        <shortName>EF-1-alpha</shortName>
    </recommendedName>
</protein>
<reference key="1">
    <citation type="submission" date="1995-12" db="EMBL/GenBank/DDBJ databases">
        <authorList>
            <person name="Schroeder J."/>
        </authorList>
    </citation>
    <scope>NUCLEOTIDE SEQUENCE [MRNA]</scope>
</reference>